<reference key="1">
    <citation type="journal article" date="1984" name="FEBS Lett.">
        <title>The myoglobin of primates: the Night monkey, Aotes trivirgatus (Cebidae, Platyrrhini, Anthropoidea).</title>
        <authorList>
            <person name="Heinbokel N."/>
            <person name="Lehmann H."/>
        </authorList>
    </citation>
    <scope>PROTEIN SEQUENCE OF 2-154</scope>
    <source>
        <tissue>Skeletal muscle</tissue>
    </source>
</reference>
<accession>P02151</accession>
<gene>
    <name type="primary">MB</name>
</gene>
<protein>
    <recommendedName>
        <fullName>Myoglobin</fullName>
    </recommendedName>
    <alternativeName>
        <fullName evidence="1">Nitrite reductase MB</fullName>
        <ecNumber evidence="1">1.7.-.-</ecNumber>
    </alternativeName>
    <alternativeName>
        <fullName evidence="1">Pseudoperoxidase MB</fullName>
        <ecNumber evidence="1">1.11.1.-</ecNumber>
    </alternativeName>
</protein>
<organism>
    <name type="scientific">Aotus trivirgatus</name>
    <name type="common">Three-striped night monkey</name>
    <name type="synonym">Douroucouli</name>
    <dbReference type="NCBI Taxonomy" id="9505"/>
    <lineage>
        <taxon>Eukaryota</taxon>
        <taxon>Metazoa</taxon>
        <taxon>Chordata</taxon>
        <taxon>Craniata</taxon>
        <taxon>Vertebrata</taxon>
        <taxon>Euteleostomi</taxon>
        <taxon>Mammalia</taxon>
        <taxon>Eutheria</taxon>
        <taxon>Euarchontoglires</taxon>
        <taxon>Primates</taxon>
        <taxon>Haplorrhini</taxon>
        <taxon>Platyrrhini</taxon>
        <taxon>Aotidae</taxon>
        <taxon>Aotus</taxon>
    </lineage>
</organism>
<feature type="initiator methionine" description="Removed" evidence="8">
    <location>
        <position position="1"/>
    </location>
</feature>
<feature type="chain" id="PRO_0000053277" description="Myoglobin">
    <location>
        <begin position="2"/>
        <end position="154"/>
    </location>
</feature>
<feature type="domain" description="Globin" evidence="7">
    <location>
        <begin position="2"/>
        <end position="148"/>
    </location>
</feature>
<feature type="binding site" evidence="5">
    <location>
        <position position="65"/>
    </location>
    <ligand>
        <name>nitrite</name>
        <dbReference type="ChEBI" id="CHEBI:16301"/>
    </ligand>
</feature>
<feature type="binding site" evidence="3 7">
    <location>
        <position position="65"/>
    </location>
    <ligand>
        <name>O2</name>
        <dbReference type="ChEBI" id="CHEBI:15379"/>
    </ligand>
</feature>
<feature type="binding site" description="proximal binding residue" evidence="1">
    <location>
        <position position="94"/>
    </location>
    <ligand>
        <name>heme b</name>
        <dbReference type="ChEBI" id="CHEBI:60344"/>
    </ligand>
    <ligandPart>
        <name>Fe</name>
        <dbReference type="ChEBI" id="CHEBI:18248"/>
    </ligandPart>
</feature>
<feature type="modified residue" description="Phosphoserine" evidence="6">
    <location>
        <position position="4"/>
    </location>
</feature>
<feature type="modified residue" description="Phosphothreonine" evidence="4">
    <location>
        <position position="68"/>
    </location>
</feature>
<keyword id="KW-0963">Cytoplasm</keyword>
<keyword id="KW-0903">Direct protein sequencing</keyword>
<keyword id="KW-0349">Heme</keyword>
<keyword id="KW-0408">Iron</keyword>
<keyword id="KW-0479">Metal-binding</keyword>
<keyword id="KW-0514">Muscle protein</keyword>
<keyword id="KW-0560">Oxidoreductase</keyword>
<keyword id="KW-0561">Oxygen transport</keyword>
<keyword id="KW-0597">Phosphoprotein</keyword>
<keyword id="KW-0813">Transport</keyword>
<dbReference type="EC" id="1.7.-.-" evidence="1"/>
<dbReference type="EC" id="1.11.1.-" evidence="1"/>
<dbReference type="PIR" id="A02471">
    <property type="entry name" value="MYMQN"/>
</dbReference>
<dbReference type="SMR" id="P02151"/>
<dbReference type="GO" id="GO:0070062">
    <property type="term" value="C:extracellular exosome"/>
    <property type="evidence" value="ECO:0007669"/>
    <property type="project" value="TreeGrafter"/>
</dbReference>
<dbReference type="GO" id="GO:0016528">
    <property type="term" value="C:sarcoplasm"/>
    <property type="evidence" value="ECO:0000250"/>
    <property type="project" value="UniProtKB"/>
</dbReference>
<dbReference type="GO" id="GO:0020037">
    <property type="term" value="F:heme binding"/>
    <property type="evidence" value="ECO:0007669"/>
    <property type="project" value="InterPro"/>
</dbReference>
<dbReference type="GO" id="GO:0046872">
    <property type="term" value="F:metal ion binding"/>
    <property type="evidence" value="ECO:0007669"/>
    <property type="project" value="UniProtKB-KW"/>
</dbReference>
<dbReference type="GO" id="GO:0098809">
    <property type="term" value="F:nitrite reductase activity"/>
    <property type="evidence" value="ECO:0000250"/>
    <property type="project" value="UniProtKB"/>
</dbReference>
<dbReference type="GO" id="GO:0019825">
    <property type="term" value="F:oxygen binding"/>
    <property type="evidence" value="ECO:0007669"/>
    <property type="project" value="InterPro"/>
</dbReference>
<dbReference type="GO" id="GO:0005344">
    <property type="term" value="F:oxygen carrier activity"/>
    <property type="evidence" value="ECO:0000250"/>
    <property type="project" value="UniProtKB"/>
</dbReference>
<dbReference type="GO" id="GO:0004601">
    <property type="term" value="F:peroxidase activity"/>
    <property type="evidence" value="ECO:0000250"/>
    <property type="project" value="UniProtKB"/>
</dbReference>
<dbReference type="GO" id="GO:0019430">
    <property type="term" value="P:removal of superoxide radicals"/>
    <property type="evidence" value="ECO:0000250"/>
    <property type="project" value="UniProtKB"/>
</dbReference>
<dbReference type="CDD" id="cd08926">
    <property type="entry name" value="Mb"/>
    <property type="match status" value="1"/>
</dbReference>
<dbReference type="Gene3D" id="6.10.140.2100">
    <property type="match status" value="1"/>
</dbReference>
<dbReference type="Gene3D" id="6.10.140.2110">
    <property type="match status" value="1"/>
</dbReference>
<dbReference type="InterPro" id="IPR000971">
    <property type="entry name" value="Globin"/>
</dbReference>
<dbReference type="InterPro" id="IPR009050">
    <property type="entry name" value="Globin-like_sf"/>
</dbReference>
<dbReference type="InterPro" id="IPR002335">
    <property type="entry name" value="Myoglobin"/>
</dbReference>
<dbReference type="PANTHER" id="PTHR47132">
    <property type="entry name" value="MYOGLOBIN"/>
    <property type="match status" value="1"/>
</dbReference>
<dbReference type="PANTHER" id="PTHR47132:SF1">
    <property type="entry name" value="MYOGLOBIN"/>
    <property type="match status" value="1"/>
</dbReference>
<dbReference type="Pfam" id="PF00042">
    <property type="entry name" value="Globin"/>
    <property type="match status" value="1"/>
</dbReference>
<dbReference type="PRINTS" id="PR00613">
    <property type="entry name" value="MYOGLOBIN"/>
</dbReference>
<dbReference type="SUPFAM" id="SSF46458">
    <property type="entry name" value="Globin-like"/>
    <property type="match status" value="1"/>
</dbReference>
<dbReference type="PROSITE" id="PS01033">
    <property type="entry name" value="GLOBIN"/>
    <property type="match status" value="1"/>
</dbReference>
<sequence length="154" mass="17161">MGLSDGEWQLVLNVWGKVEADVPSHGQEVLISLFKGHPETLEKFDKFKHLKSEDEMKASEELKKHGVTVLTALGGILKKKGHHEAELKPLAQSHATKHKIPVKYLEFISDAIVHVLQKKHPGDFGADAQGAMKKALELFRNDMAAKYKELGFQG</sequence>
<evidence type="ECO:0000250" key="1">
    <source>
        <dbReference type="UniProtKB" id="P02144"/>
    </source>
</evidence>
<evidence type="ECO:0000250" key="2">
    <source>
        <dbReference type="UniProtKB" id="P02185"/>
    </source>
</evidence>
<evidence type="ECO:0000250" key="3">
    <source>
        <dbReference type="UniProtKB" id="P02189"/>
    </source>
</evidence>
<evidence type="ECO:0000250" key="4">
    <source>
        <dbReference type="UniProtKB" id="P04247"/>
    </source>
</evidence>
<evidence type="ECO:0000250" key="5">
    <source>
        <dbReference type="UniProtKB" id="P68082"/>
    </source>
</evidence>
<evidence type="ECO:0000250" key="6">
    <source>
        <dbReference type="UniProtKB" id="Q9QZ76"/>
    </source>
</evidence>
<evidence type="ECO:0000255" key="7">
    <source>
        <dbReference type="PROSITE-ProRule" id="PRU00238"/>
    </source>
</evidence>
<evidence type="ECO:0000269" key="8">
    <source>
    </source>
</evidence>
<name>MYG_AOTTR</name>
<proteinExistence type="evidence at protein level"/>
<comment type="function">
    <text evidence="1">Monomeric heme protein which primary function is to store oxygen and facilitate its diffusion within muscle tissues. Reversibly binds oxygen through a pentacoordinated heme iron and enables its timely and efficient release as needed during periods of heightened demand. Depending on the oxidative conditions of tissues and cells, and in addition to its ability to bind oxygen, it also has a nitrite reductase activity whereby it regulates the production of bioactive nitric oxide. Under stress conditions, like hypoxia and anoxia, it also protects cells against reactive oxygen species thanks to its pseudoperoxidase activity.</text>
</comment>
<comment type="catalytic activity">
    <reaction evidence="1">
        <text>Fe(III)-heme b-[protein] + nitric oxide + H2O = Fe(II)-heme b-[protein] + nitrite + 2 H(+)</text>
        <dbReference type="Rhea" id="RHEA:77711"/>
        <dbReference type="Rhea" id="RHEA-COMP:18975"/>
        <dbReference type="Rhea" id="RHEA-COMP:18976"/>
        <dbReference type="ChEBI" id="CHEBI:15377"/>
        <dbReference type="ChEBI" id="CHEBI:15378"/>
        <dbReference type="ChEBI" id="CHEBI:16301"/>
        <dbReference type="ChEBI" id="CHEBI:16480"/>
        <dbReference type="ChEBI" id="CHEBI:55376"/>
        <dbReference type="ChEBI" id="CHEBI:60344"/>
    </reaction>
    <physiologicalReaction direction="right-to-left" evidence="1">
        <dbReference type="Rhea" id="RHEA:77713"/>
    </physiologicalReaction>
</comment>
<comment type="catalytic activity">
    <reaction evidence="1">
        <text>H2O2 + AH2 = A + 2 H2O</text>
        <dbReference type="Rhea" id="RHEA:30275"/>
        <dbReference type="ChEBI" id="CHEBI:13193"/>
        <dbReference type="ChEBI" id="CHEBI:15377"/>
        <dbReference type="ChEBI" id="CHEBI:16240"/>
        <dbReference type="ChEBI" id="CHEBI:17499"/>
    </reaction>
</comment>
<comment type="subunit">
    <text evidence="2">Monomeric.</text>
</comment>
<comment type="subcellular location">
    <subcellularLocation>
        <location evidence="1">Cytoplasm</location>
        <location evidence="1">Sarcoplasm</location>
    </subcellularLocation>
</comment>
<comment type="similarity">
    <text evidence="7">Belongs to the globin family.</text>
</comment>